<reference key="1">
    <citation type="journal article" date="2006" name="Proc. Natl. Acad. Sci. U.S.A.">
        <title>The complete genome of Rhodococcus sp. RHA1 provides insights into a catabolic powerhouse.</title>
        <authorList>
            <person name="McLeod M.P."/>
            <person name="Warren R.L."/>
            <person name="Hsiao W.W.L."/>
            <person name="Araki N."/>
            <person name="Myhre M."/>
            <person name="Fernandes C."/>
            <person name="Miyazawa D."/>
            <person name="Wong W."/>
            <person name="Lillquist A.L."/>
            <person name="Wang D."/>
            <person name="Dosanjh M."/>
            <person name="Hara H."/>
            <person name="Petrescu A."/>
            <person name="Morin R.D."/>
            <person name="Yang G."/>
            <person name="Stott J.M."/>
            <person name="Schein J.E."/>
            <person name="Shin H."/>
            <person name="Smailus D."/>
            <person name="Siddiqui A.S."/>
            <person name="Marra M.A."/>
            <person name="Jones S.J.M."/>
            <person name="Holt R."/>
            <person name="Brinkman F.S.L."/>
            <person name="Miyauchi K."/>
            <person name="Fukuda M."/>
            <person name="Davies J.E."/>
            <person name="Mohn W.W."/>
            <person name="Eltis L.D."/>
        </authorList>
    </citation>
    <scope>NUCLEOTIDE SEQUENCE [LARGE SCALE GENOMIC DNA]</scope>
    <source>
        <strain>RHA1</strain>
    </source>
</reference>
<name>TRHO_RHOJR</name>
<feature type="chain" id="PRO_1000200370" description="tRNA uridine(34) hydroxylase">
    <location>
        <begin position="1"/>
        <end position="285"/>
    </location>
</feature>
<feature type="domain" description="Rhodanese" evidence="1">
    <location>
        <begin position="130"/>
        <end position="225"/>
    </location>
</feature>
<feature type="active site" description="Cysteine persulfide intermediate" evidence="1">
    <location>
        <position position="185"/>
    </location>
</feature>
<dbReference type="EC" id="1.14.-.-" evidence="1"/>
<dbReference type="EMBL" id="CP000431">
    <property type="protein sequence ID" value="ABG92690.1"/>
    <property type="molecule type" value="Genomic_DNA"/>
</dbReference>
<dbReference type="RefSeq" id="WP_011594081.1">
    <property type="nucleotide sequence ID" value="NC_008268.1"/>
</dbReference>
<dbReference type="SMR" id="Q0SIE6"/>
<dbReference type="KEGG" id="rha:RHA1_ro00857"/>
<dbReference type="PATRIC" id="fig|101510.16.peg.876"/>
<dbReference type="eggNOG" id="COG1054">
    <property type="taxonomic scope" value="Bacteria"/>
</dbReference>
<dbReference type="HOGENOM" id="CLU_038878_1_0_11"/>
<dbReference type="OrthoDB" id="9778326at2"/>
<dbReference type="Proteomes" id="UP000008710">
    <property type="component" value="Chromosome"/>
</dbReference>
<dbReference type="GO" id="GO:0016705">
    <property type="term" value="F:oxidoreductase activity, acting on paired donors, with incorporation or reduction of molecular oxygen"/>
    <property type="evidence" value="ECO:0007669"/>
    <property type="project" value="UniProtKB-UniRule"/>
</dbReference>
<dbReference type="GO" id="GO:0006400">
    <property type="term" value="P:tRNA modification"/>
    <property type="evidence" value="ECO:0007669"/>
    <property type="project" value="UniProtKB-UniRule"/>
</dbReference>
<dbReference type="CDD" id="cd01518">
    <property type="entry name" value="RHOD_YceA"/>
    <property type="match status" value="1"/>
</dbReference>
<dbReference type="Gene3D" id="3.30.70.100">
    <property type="match status" value="1"/>
</dbReference>
<dbReference type="Gene3D" id="3.40.250.10">
    <property type="entry name" value="Rhodanese-like domain"/>
    <property type="match status" value="1"/>
</dbReference>
<dbReference type="HAMAP" id="MF_00469">
    <property type="entry name" value="TrhO"/>
    <property type="match status" value="1"/>
</dbReference>
<dbReference type="InterPro" id="IPR001763">
    <property type="entry name" value="Rhodanese-like_dom"/>
</dbReference>
<dbReference type="InterPro" id="IPR036873">
    <property type="entry name" value="Rhodanese-like_dom_sf"/>
</dbReference>
<dbReference type="InterPro" id="IPR022111">
    <property type="entry name" value="Rhodanese_C"/>
</dbReference>
<dbReference type="InterPro" id="IPR020936">
    <property type="entry name" value="TrhO"/>
</dbReference>
<dbReference type="InterPro" id="IPR040503">
    <property type="entry name" value="TRHO_N"/>
</dbReference>
<dbReference type="NCBIfam" id="NF001134">
    <property type="entry name" value="PRK00142.1-2"/>
    <property type="match status" value="1"/>
</dbReference>
<dbReference type="PANTHER" id="PTHR43268">
    <property type="entry name" value="THIOSULFATE SULFURTRANSFERASE/RHODANESE-LIKE DOMAIN-CONTAINING PROTEIN 2"/>
    <property type="match status" value="1"/>
</dbReference>
<dbReference type="PANTHER" id="PTHR43268:SF6">
    <property type="entry name" value="THIOSULFATE SULFURTRANSFERASE_RHODANESE-LIKE DOMAIN-CONTAINING PROTEIN 2"/>
    <property type="match status" value="1"/>
</dbReference>
<dbReference type="Pfam" id="PF00581">
    <property type="entry name" value="Rhodanese"/>
    <property type="match status" value="1"/>
</dbReference>
<dbReference type="Pfam" id="PF12368">
    <property type="entry name" value="Rhodanese_C"/>
    <property type="match status" value="1"/>
</dbReference>
<dbReference type="Pfam" id="PF17773">
    <property type="entry name" value="UPF0176_N"/>
    <property type="match status" value="1"/>
</dbReference>
<dbReference type="SMART" id="SM00450">
    <property type="entry name" value="RHOD"/>
    <property type="match status" value="1"/>
</dbReference>
<dbReference type="SUPFAM" id="SSF52821">
    <property type="entry name" value="Rhodanese/Cell cycle control phosphatase"/>
    <property type="match status" value="1"/>
</dbReference>
<dbReference type="PROSITE" id="PS50206">
    <property type="entry name" value="RHODANESE_3"/>
    <property type="match status" value="1"/>
</dbReference>
<sequence>MAVPKIVLFYVFTPLADPEAIRLWQYTLAEANNLTGRILVSEHGINATVGGDIRDVKRYVKGTRSYAPFKDADIKWSDGLGDDFPRLSVKVRPEIVTFGAPGELKVDADGVVGGGTHLAPDEVHRLVEGRGDDVVFFDGRNGFEAEIGRFRDAVVPDVSTTREFVHELDSGKYDHLKDKAVVTYCTGGVRCEVLSSLMRSRGFGEVYQLDGGIVRYGEAFGDTGLWEGSLYVFDKRMSIEFSDQAKTLGRCSTCGGPTSRYENMPDDRGRELVLVCADCTENRAG</sequence>
<comment type="function">
    <text evidence="1">Catalyzes oxygen-dependent 5-hydroxyuridine (ho5U) modification at position 34 in tRNAs.</text>
</comment>
<comment type="catalytic activity">
    <reaction evidence="1">
        <text>uridine(34) in tRNA + AH2 + O2 = 5-hydroxyuridine(34) in tRNA + A + H2O</text>
        <dbReference type="Rhea" id="RHEA:64224"/>
        <dbReference type="Rhea" id="RHEA-COMP:11727"/>
        <dbReference type="Rhea" id="RHEA-COMP:13381"/>
        <dbReference type="ChEBI" id="CHEBI:13193"/>
        <dbReference type="ChEBI" id="CHEBI:15377"/>
        <dbReference type="ChEBI" id="CHEBI:15379"/>
        <dbReference type="ChEBI" id="CHEBI:17499"/>
        <dbReference type="ChEBI" id="CHEBI:65315"/>
        <dbReference type="ChEBI" id="CHEBI:136877"/>
    </reaction>
</comment>
<comment type="similarity">
    <text evidence="1">Belongs to the TrhO family.</text>
</comment>
<evidence type="ECO:0000255" key="1">
    <source>
        <dbReference type="HAMAP-Rule" id="MF_00469"/>
    </source>
</evidence>
<accession>Q0SIE6</accession>
<keyword id="KW-0560">Oxidoreductase</keyword>
<keyword id="KW-0819">tRNA processing</keyword>
<proteinExistence type="inferred from homology"/>
<organism>
    <name type="scientific">Rhodococcus jostii (strain RHA1)</name>
    <dbReference type="NCBI Taxonomy" id="101510"/>
    <lineage>
        <taxon>Bacteria</taxon>
        <taxon>Bacillati</taxon>
        <taxon>Actinomycetota</taxon>
        <taxon>Actinomycetes</taxon>
        <taxon>Mycobacteriales</taxon>
        <taxon>Nocardiaceae</taxon>
        <taxon>Rhodococcus</taxon>
    </lineage>
</organism>
<gene>
    <name evidence="1" type="primary">trhO</name>
    <name type="ordered locus">RHA1_ro00857</name>
</gene>
<protein>
    <recommendedName>
        <fullName evidence="1">tRNA uridine(34) hydroxylase</fullName>
        <ecNumber evidence="1">1.14.-.-</ecNumber>
    </recommendedName>
    <alternativeName>
        <fullName evidence="1">tRNA hydroxylation protein O</fullName>
    </alternativeName>
</protein>